<organism>
    <name type="scientific">Aspergillus fumigatus (strain CBS 144.89 / FGSC A1163 / CEA10)</name>
    <name type="common">Neosartorya fumigata</name>
    <dbReference type="NCBI Taxonomy" id="451804"/>
    <lineage>
        <taxon>Eukaryota</taxon>
        <taxon>Fungi</taxon>
        <taxon>Dikarya</taxon>
        <taxon>Ascomycota</taxon>
        <taxon>Pezizomycotina</taxon>
        <taxon>Eurotiomycetes</taxon>
        <taxon>Eurotiomycetidae</taxon>
        <taxon>Eurotiales</taxon>
        <taxon>Aspergillaceae</taxon>
        <taxon>Aspergillus</taxon>
        <taxon>Aspergillus subgen. Fumigati</taxon>
    </lineage>
</organism>
<gene>
    <name type="primary">pgaB</name>
    <name type="synonym">pecB</name>
    <name type="ORF">AFUB_084640</name>
</gene>
<reference key="1">
    <citation type="journal article" date="2008" name="PLoS Genet.">
        <title>Genomic islands in the pathogenic filamentous fungus Aspergillus fumigatus.</title>
        <authorList>
            <person name="Fedorova N.D."/>
            <person name="Khaldi N."/>
            <person name="Joardar V.S."/>
            <person name="Maiti R."/>
            <person name="Amedeo P."/>
            <person name="Anderson M.J."/>
            <person name="Crabtree J."/>
            <person name="Silva J.C."/>
            <person name="Badger J.H."/>
            <person name="Albarraq A."/>
            <person name="Angiuoli S."/>
            <person name="Bussey H."/>
            <person name="Bowyer P."/>
            <person name="Cotty P.J."/>
            <person name="Dyer P.S."/>
            <person name="Egan A."/>
            <person name="Galens K."/>
            <person name="Fraser-Liggett C.M."/>
            <person name="Haas B.J."/>
            <person name="Inman J.M."/>
            <person name="Kent R."/>
            <person name="Lemieux S."/>
            <person name="Malavazi I."/>
            <person name="Orvis J."/>
            <person name="Roemer T."/>
            <person name="Ronning C.M."/>
            <person name="Sundaram J.P."/>
            <person name="Sutton G."/>
            <person name="Turner G."/>
            <person name="Venter J.C."/>
            <person name="White O.R."/>
            <person name="Whitty B.R."/>
            <person name="Youngman P."/>
            <person name="Wolfe K.H."/>
            <person name="Goldman G.H."/>
            <person name="Wortman J.R."/>
            <person name="Jiang B."/>
            <person name="Denning D.W."/>
            <person name="Nierman W.C."/>
        </authorList>
    </citation>
    <scope>NUCLEOTIDE SEQUENCE [LARGE SCALE GENOMIC DNA]</scope>
    <source>
        <strain>CBS 144.89 / FGSC A1163 / CEA10</strain>
    </source>
</reference>
<accession>B0YAH0</accession>
<proteinExistence type="inferred from homology"/>
<feature type="signal peptide" evidence="2">
    <location>
        <begin position="1"/>
        <end position="20"/>
    </location>
</feature>
<feature type="propeptide" id="PRO_0000393644" evidence="2">
    <location>
        <begin position="21"/>
        <end position="29"/>
    </location>
</feature>
<feature type="chain" id="PRO_0000393645" description="Probable endopolygalacturonase B">
    <location>
        <begin position="30"/>
        <end position="364"/>
    </location>
</feature>
<feature type="repeat" description="PbH1 1">
    <location>
        <begin position="159"/>
        <end position="188"/>
    </location>
</feature>
<feature type="repeat" description="PbH1 2">
    <location>
        <begin position="189"/>
        <end position="210"/>
    </location>
</feature>
<feature type="repeat" description="PbH1 3">
    <location>
        <begin position="211"/>
        <end position="231"/>
    </location>
</feature>
<feature type="repeat" description="PbH1 4">
    <location>
        <begin position="240"/>
        <end position="261"/>
    </location>
</feature>
<feature type="repeat" description="PbH1 5">
    <location>
        <begin position="269"/>
        <end position="291"/>
    </location>
</feature>
<feature type="repeat" description="PbH1 6">
    <location>
        <begin position="303"/>
        <end position="324"/>
    </location>
</feature>
<feature type="active site" description="Proton donor" evidence="3">
    <location>
        <position position="203"/>
    </location>
</feature>
<feature type="active site" evidence="3">
    <location>
        <position position="225"/>
    </location>
</feature>
<feature type="glycosylation site" description="N-linked (GlcNAc...) asparagine" evidence="2">
    <location>
        <position position="138"/>
    </location>
</feature>
<feature type="glycosylation site" description="N-linked (GlcNAc...) asparagine" evidence="2">
    <location>
        <position position="141"/>
    </location>
</feature>
<feature type="glycosylation site" description="N-linked (GlcNAc...) asparagine" evidence="2">
    <location>
        <position position="338"/>
    </location>
</feature>
<feature type="disulfide bond" evidence="1">
    <location>
        <begin position="32"/>
        <end position="47"/>
    </location>
</feature>
<feature type="disulfide bond" evidence="1">
    <location>
        <begin position="205"/>
        <end position="221"/>
    </location>
</feature>
<feature type="disulfide bond" evidence="1">
    <location>
        <begin position="331"/>
        <end position="336"/>
    </location>
</feature>
<feature type="disulfide bond" evidence="1">
    <location>
        <begin position="355"/>
        <end position="364"/>
    </location>
</feature>
<comment type="function">
    <text evidence="1">Involved in maceration and soft-rotting of plant tissue. Hydrolyzes the 1,4-alpha glycosidic bonds of de-esterified pectate in the smooth region of the plant cell wall (By similarity).</text>
</comment>
<comment type="catalytic activity">
    <reaction>
        <text>(1,4-alpha-D-galacturonosyl)n+m + H2O = (1,4-alpha-D-galacturonosyl)n + (1,4-alpha-D-galacturonosyl)m.</text>
        <dbReference type="EC" id="3.2.1.15"/>
    </reaction>
</comment>
<comment type="subcellular location">
    <subcellularLocation>
        <location evidence="1">Secreted</location>
    </subcellularLocation>
</comment>
<comment type="similarity">
    <text evidence="4">Belongs to the glycosyl hydrolase 28 family.</text>
</comment>
<evidence type="ECO:0000250" key="1"/>
<evidence type="ECO:0000255" key="2"/>
<evidence type="ECO:0000255" key="3">
    <source>
        <dbReference type="PROSITE-ProRule" id="PRU10052"/>
    </source>
</evidence>
<evidence type="ECO:0000305" key="4"/>
<protein>
    <recommendedName>
        <fullName>Probable endopolygalacturonase B</fullName>
        <ecNumber>3.2.1.15</ecNumber>
    </recommendedName>
    <alternativeName>
        <fullName>Pectinase B</fullName>
    </alternativeName>
    <alternativeName>
        <fullName>Polygalacturonase B</fullName>
    </alternativeName>
</protein>
<name>PGLRB_ASPFC</name>
<keyword id="KW-0961">Cell wall biogenesis/degradation</keyword>
<keyword id="KW-1015">Disulfide bond</keyword>
<keyword id="KW-0325">Glycoprotein</keyword>
<keyword id="KW-0326">Glycosidase</keyword>
<keyword id="KW-0378">Hydrolase</keyword>
<keyword id="KW-0677">Repeat</keyword>
<keyword id="KW-0964">Secreted</keyword>
<keyword id="KW-0732">Signal</keyword>
<keyword id="KW-0865">Zymogen</keyword>
<dbReference type="EC" id="3.2.1.15"/>
<dbReference type="EMBL" id="DS499600">
    <property type="protein sequence ID" value="EDP49013.1"/>
    <property type="molecule type" value="Genomic_DNA"/>
</dbReference>
<dbReference type="SMR" id="B0YAH0"/>
<dbReference type="GlyCosmos" id="B0YAH0">
    <property type="glycosylation" value="3 sites, No reported glycans"/>
</dbReference>
<dbReference type="EnsemblFungi" id="EDP49013">
    <property type="protein sequence ID" value="EDP49013"/>
    <property type="gene ID" value="AFUB_084640"/>
</dbReference>
<dbReference type="VEuPathDB" id="FungiDB:AFUB_084640"/>
<dbReference type="HOGENOM" id="CLU_040116_0_0_1"/>
<dbReference type="OrthoDB" id="96161at5052"/>
<dbReference type="PhylomeDB" id="B0YAH0"/>
<dbReference type="Proteomes" id="UP000001699">
    <property type="component" value="Unassembled WGS sequence"/>
</dbReference>
<dbReference type="GO" id="GO:0005576">
    <property type="term" value="C:extracellular region"/>
    <property type="evidence" value="ECO:0000250"/>
    <property type="project" value="UniProtKB"/>
</dbReference>
<dbReference type="GO" id="GO:0004650">
    <property type="term" value="F:polygalacturonase activity"/>
    <property type="evidence" value="ECO:0000250"/>
    <property type="project" value="UniProtKB"/>
</dbReference>
<dbReference type="GO" id="GO:0071555">
    <property type="term" value="P:cell wall organization"/>
    <property type="evidence" value="ECO:0007669"/>
    <property type="project" value="UniProtKB-KW"/>
</dbReference>
<dbReference type="GO" id="GO:0045490">
    <property type="term" value="P:pectin catabolic process"/>
    <property type="evidence" value="ECO:0000250"/>
    <property type="project" value="UniProtKB"/>
</dbReference>
<dbReference type="FunFam" id="2.160.20.10:FF:000002">
    <property type="entry name" value="Endopolygalacturonase D"/>
    <property type="match status" value="1"/>
</dbReference>
<dbReference type="Gene3D" id="2.160.20.10">
    <property type="entry name" value="Single-stranded right-handed beta-helix, Pectin lyase-like"/>
    <property type="match status" value="1"/>
</dbReference>
<dbReference type="InterPro" id="IPR000743">
    <property type="entry name" value="Glyco_hydro_28"/>
</dbReference>
<dbReference type="InterPro" id="IPR050434">
    <property type="entry name" value="Glycosyl_hydrlase_28"/>
</dbReference>
<dbReference type="InterPro" id="IPR006626">
    <property type="entry name" value="PbH1"/>
</dbReference>
<dbReference type="InterPro" id="IPR012334">
    <property type="entry name" value="Pectin_lyas_fold"/>
</dbReference>
<dbReference type="InterPro" id="IPR011050">
    <property type="entry name" value="Pectin_lyase_fold/virulence"/>
</dbReference>
<dbReference type="PANTHER" id="PTHR31884:SF13">
    <property type="entry name" value="ENDOPOLYGALACTURONASE B"/>
    <property type="match status" value="1"/>
</dbReference>
<dbReference type="PANTHER" id="PTHR31884">
    <property type="entry name" value="POLYGALACTURONASE"/>
    <property type="match status" value="1"/>
</dbReference>
<dbReference type="Pfam" id="PF00295">
    <property type="entry name" value="Glyco_hydro_28"/>
    <property type="match status" value="1"/>
</dbReference>
<dbReference type="SMART" id="SM00710">
    <property type="entry name" value="PbH1"/>
    <property type="match status" value="6"/>
</dbReference>
<dbReference type="SUPFAM" id="SSF51126">
    <property type="entry name" value="Pectin lyase-like"/>
    <property type="match status" value="1"/>
</dbReference>
<dbReference type="PROSITE" id="PS00502">
    <property type="entry name" value="POLYGALACTURONASE"/>
    <property type="match status" value="1"/>
</dbReference>
<sequence>MHFFQSSLVAATMGAALVAAAPAADLETRGSCTFTSTSALKSGKASCSTITLQNIAVPAGETLDLTGLKAGTTVVFDGTTTFGYKEWEGPLISASGTSITIKQNPGAKIDCDGARWWDGKGGNGGKKKPKFFSAHKLNKSNITGLKVYNTPVHGFSIQSDHLTIKDVLLDNSAGTKLGHNTDAFDVGSSTYITIDGATVYNQDDCLAVNSGEHITFTNGYCNGGHGLSIGSVGGRSNNVVNDVTISNSQVINSQNGARIKTVYGATGSVTGVKFQDISLKGITKYGIVVQQDYENGKPTGKPTNGVKVSDITFEKVTGTVTSSATDIYILCGSGSCTNWTWSGNSVTGGKKSSSCKNVPAGASC</sequence>